<name>GATB_NOSS1</name>
<dbReference type="EC" id="6.3.5.-" evidence="1"/>
<dbReference type="EMBL" id="BA000019">
    <property type="protein sequence ID" value="BAB73353.1"/>
    <property type="molecule type" value="Genomic_DNA"/>
</dbReference>
<dbReference type="PIR" id="AI1980">
    <property type="entry name" value="AI1980"/>
</dbReference>
<dbReference type="RefSeq" id="WP_010995568.1">
    <property type="nucleotide sequence ID" value="NZ_RSCN01000029.1"/>
</dbReference>
<dbReference type="SMR" id="Q8YX22"/>
<dbReference type="STRING" id="103690.gene:10493411"/>
<dbReference type="KEGG" id="ana:alr1396"/>
<dbReference type="eggNOG" id="COG0064">
    <property type="taxonomic scope" value="Bacteria"/>
</dbReference>
<dbReference type="OrthoDB" id="9804078at2"/>
<dbReference type="Proteomes" id="UP000002483">
    <property type="component" value="Chromosome"/>
</dbReference>
<dbReference type="GO" id="GO:0050566">
    <property type="term" value="F:asparaginyl-tRNA synthase (glutamine-hydrolyzing) activity"/>
    <property type="evidence" value="ECO:0007669"/>
    <property type="project" value="RHEA"/>
</dbReference>
<dbReference type="GO" id="GO:0005524">
    <property type="term" value="F:ATP binding"/>
    <property type="evidence" value="ECO:0007669"/>
    <property type="project" value="UniProtKB-KW"/>
</dbReference>
<dbReference type="GO" id="GO:0050567">
    <property type="term" value="F:glutaminyl-tRNA synthase (glutamine-hydrolyzing) activity"/>
    <property type="evidence" value="ECO:0007669"/>
    <property type="project" value="UniProtKB-UniRule"/>
</dbReference>
<dbReference type="GO" id="GO:0070681">
    <property type="term" value="P:glutaminyl-tRNAGln biosynthesis via transamidation"/>
    <property type="evidence" value="ECO:0007669"/>
    <property type="project" value="TreeGrafter"/>
</dbReference>
<dbReference type="GO" id="GO:0006412">
    <property type="term" value="P:translation"/>
    <property type="evidence" value="ECO:0007669"/>
    <property type="project" value="UniProtKB-UniRule"/>
</dbReference>
<dbReference type="FunFam" id="1.10.10.410:FF:000001">
    <property type="entry name" value="Aspartyl/glutamyl-tRNA(Asn/Gln) amidotransferase subunit B"/>
    <property type="match status" value="1"/>
</dbReference>
<dbReference type="FunFam" id="1.10.150.380:FF:000001">
    <property type="entry name" value="Aspartyl/glutamyl-tRNA(Asn/Gln) amidotransferase subunit B"/>
    <property type="match status" value="1"/>
</dbReference>
<dbReference type="Gene3D" id="1.10.10.410">
    <property type="match status" value="1"/>
</dbReference>
<dbReference type="Gene3D" id="1.10.150.380">
    <property type="entry name" value="GatB domain, N-terminal subdomain"/>
    <property type="match status" value="1"/>
</dbReference>
<dbReference type="HAMAP" id="MF_00121">
    <property type="entry name" value="GatB"/>
    <property type="match status" value="1"/>
</dbReference>
<dbReference type="InterPro" id="IPR017959">
    <property type="entry name" value="Asn/Gln-tRNA_amidoTrfase_suB/E"/>
</dbReference>
<dbReference type="InterPro" id="IPR006075">
    <property type="entry name" value="Asn/Gln-tRNA_Trfase_suB/E_cat"/>
</dbReference>
<dbReference type="InterPro" id="IPR018027">
    <property type="entry name" value="Asn/Gln_amidotransferase"/>
</dbReference>
<dbReference type="InterPro" id="IPR003789">
    <property type="entry name" value="Asn/Gln_tRNA_amidoTrase-B-like"/>
</dbReference>
<dbReference type="InterPro" id="IPR004413">
    <property type="entry name" value="GatB"/>
</dbReference>
<dbReference type="InterPro" id="IPR042114">
    <property type="entry name" value="GatB_C_1"/>
</dbReference>
<dbReference type="InterPro" id="IPR023168">
    <property type="entry name" value="GatB_Yqey_C_2"/>
</dbReference>
<dbReference type="InterPro" id="IPR017958">
    <property type="entry name" value="Gln-tRNA_amidoTrfase_suB_CS"/>
</dbReference>
<dbReference type="InterPro" id="IPR014746">
    <property type="entry name" value="Gln_synth/guanido_kin_cat_dom"/>
</dbReference>
<dbReference type="NCBIfam" id="TIGR00133">
    <property type="entry name" value="gatB"/>
    <property type="match status" value="1"/>
</dbReference>
<dbReference type="NCBIfam" id="NF004012">
    <property type="entry name" value="PRK05477.1-2"/>
    <property type="match status" value="1"/>
</dbReference>
<dbReference type="NCBIfam" id="NF004014">
    <property type="entry name" value="PRK05477.1-4"/>
    <property type="match status" value="1"/>
</dbReference>
<dbReference type="PANTHER" id="PTHR11659">
    <property type="entry name" value="GLUTAMYL-TRNA GLN AMIDOTRANSFERASE SUBUNIT B MITOCHONDRIAL AND PROKARYOTIC PET112-RELATED"/>
    <property type="match status" value="1"/>
</dbReference>
<dbReference type="PANTHER" id="PTHR11659:SF0">
    <property type="entry name" value="GLUTAMYL-TRNA(GLN) AMIDOTRANSFERASE SUBUNIT B, MITOCHONDRIAL"/>
    <property type="match status" value="1"/>
</dbReference>
<dbReference type="Pfam" id="PF02934">
    <property type="entry name" value="GatB_N"/>
    <property type="match status" value="1"/>
</dbReference>
<dbReference type="Pfam" id="PF02637">
    <property type="entry name" value="GatB_Yqey"/>
    <property type="match status" value="1"/>
</dbReference>
<dbReference type="SMART" id="SM00845">
    <property type="entry name" value="GatB_Yqey"/>
    <property type="match status" value="1"/>
</dbReference>
<dbReference type="SUPFAM" id="SSF89095">
    <property type="entry name" value="GatB/YqeY motif"/>
    <property type="match status" value="1"/>
</dbReference>
<dbReference type="SUPFAM" id="SSF55931">
    <property type="entry name" value="Glutamine synthetase/guanido kinase"/>
    <property type="match status" value="1"/>
</dbReference>
<dbReference type="PROSITE" id="PS01234">
    <property type="entry name" value="GATB"/>
    <property type="match status" value="1"/>
</dbReference>
<accession>Q8YX22</accession>
<proteinExistence type="inferred from homology"/>
<protein>
    <recommendedName>
        <fullName evidence="1">Aspartyl/glutamyl-tRNA(Asn/Gln) amidotransferase subunit B</fullName>
        <shortName evidence="1">Asp/Glu-ADT subunit B</shortName>
        <ecNumber evidence="1">6.3.5.-</ecNumber>
    </recommendedName>
</protein>
<keyword id="KW-0067">ATP-binding</keyword>
<keyword id="KW-0436">Ligase</keyword>
<keyword id="KW-0547">Nucleotide-binding</keyword>
<keyword id="KW-0648">Protein biosynthesis</keyword>
<keyword id="KW-1185">Reference proteome</keyword>
<feature type="chain" id="PRO_0000148756" description="Aspartyl/glutamyl-tRNA(Asn/Gln) amidotransferase subunit B">
    <location>
        <begin position="1"/>
        <end position="491"/>
    </location>
</feature>
<sequence length="491" mass="54693">MTSATTVKTEYEAIIGLETHCQLSTNTKIFSSSSTAFGADPNTNIDPVCMGLPGVLPVLNEKVLEYAVKAGLALNCQIAKYSKFDRKQYFYPDLPKNYQISQYDLPIAEHGWLEIELLDADGNPKRKRIGITRLHMEEDAGKLVHAGSDRISGSTYSLVDYNRAGVPLVEIVSEPDIRTGQEAAEYAQELRRVMRYLGVSDGNMQEGSLRCDVNISVRPVGQEKFGTKVEIKNMNSFSAIQKAIEHEIERQIEAIESGEKIIQETRLWEEGSQRTISMRIKEGSSDYRYFPEPDLAPIEVTEAQLSQWRSELPELPAQKRHRYENELGLSAYDTRVLTEDVIVSQYFEVAIASGANPKAAANWITQDIAAYLNKQKLSITEIGLTPANLADVITRIETGKISNAQAKQKLPELLTGLSPEKAFAGQELISDPSVLEPIVDEVIAANPKELEKYRNGNINLKGFFVGQVLKKTNKRADPKLTNELVENKLNG</sequence>
<reference key="1">
    <citation type="journal article" date="2001" name="DNA Res.">
        <title>Complete genomic sequence of the filamentous nitrogen-fixing cyanobacterium Anabaena sp. strain PCC 7120.</title>
        <authorList>
            <person name="Kaneko T."/>
            <person name="Nakamura Y."/>
            <person name="Wolk C.P."/>
            <person name="Kuritz T."/>
            <person name="Sasamoto S."/>
            <person name="Watanabe A."/>
            <person name="Iriguchi M."/>
            <person name="Ishikawa A."/>
            <person name="Kawashima K."/>
            <person name="Kimura T."/>
            <person name="Kishida Y."/>
            <person name="Kohara M."/>
            <person name="Matsumoto M."/>
            <person name="Matsuno A."/>
            <person name="Muraki A."/>
            <person name="Nakazaki N."/>
            <person name="Shimpo S."/>
            <person name="Sugimoto M."/>
            <person name="Takazawa M."/>
            <person name="Yamada M."/>
            <person name="Yasuda M."/>
            <person name="Tabata S."/>
        </authorList>
    </citation>
    <scope>NUCLEOTIDE SEQUENCE [LARGE SCALE GENOMIC DNA]</scope>
    <source>
        <strain>PCC 7120 / SAG 25.82 / UTEX 2576</strain>
    </source>
</reference>
<evidence type="ECO:0000255" key="1">
    <source>
        <dbReference type="HAMAP-Rule" id="MF_00121"/>
    </source>
</evidence>
<comment type="function">
    <text evidence="1">Allows the formation of correctly charged Asn-tRNA(Asn) or Gln-tRNA(Gln) through the transamidation of misacylated Asp-tRNA(Asn) or Glu-tRNA(Gln) in organisms which lack either or both of asparaginyl-tRNA or glutaminyl-tRNA synthetases. The reaction takes place in the presence of glutamine and ATP through an activated phospho-Asp-tRNA(Asn) or phospho-Glu-tRNA(Gln).</text>
</comment>
<comment type="catalytic activity">
    <reaction evidence="1">
        <text>L-glutamyl-tRNA(Gln) + L-glutamine + ATP + H2O = L-glutaminyl-tRNA(Gln) + L-glutamate + ADP + phosphate + H(+)</text>
        <dbReference type="Rhea" id="RHEA:17521"/>
        <dbReference type="Rhea" id="RHEA-COMP:9681"/>
        <dbReference type="Rhea" id="RHEA-COMP:9684"/>
        <dbReference type="ChEBI" id="CHEBI:15377"/>
        <dbReference type="ChEBI" id="CHEBI:15378"/>
        <dbReference type="ChEBI" id="CHEBI:29985"/>
        <dbReference type="ChEBI" id="CHEBI:30616"/>
        <dbReference type="ChEBI" id="CHEBI:43474"/>
        <dbReference type="ChEBI" id="CHEBI:58359"/>
        <dbReference type="ChEBI" id="CHEBI:78520"/>
        <dbReference type="ChEBI" id="CHEBI:78521"/>
        <dbReference type="ChEBI" id="CHEBI:456216"/>
    </reaction>
</comment>
<comment type="catalytic activity">
    <reaction evidence="1">
        <text>L-aspartyl-tRNA(Asn) + L-glutamine + ATP + H2O = L-asparaginyl-tRNA(Asn) + L-glutamate + ADP + phosphate + 2 H(+)</text>
        <dbReference type="Rhea" id="RHEA:14513"/>
        <dbReference type="Rhea" id="RHEA-COMP:9674"/>
        <dbReference type="Rhea" id="RHEA-COMP:9677"/>
        <dbReference type="ChEBI" id="CHEBI:15377"/>
        <dbReference type="ChEBI" id="CHEBI:15378"/>
        <dbReference type="ChEBI" id="CHEBI:29985"/>
        <dbReference type="ChEBI" id="CHEBI:30616"/>
        <dbReference type="ChEBI" id="CHEBI:43474"/>
        <dbReference type="ChEBI" id="CHEBI:58359"/>
        <dbReference type="ChEBI" id="CHEBI:78515"/>
        <dbReference type="ChEBI" id="CHEBI:78516"/>
        <dbReference type="ChEBI" id="CHEBI:456216"/>
    </reaction>
</comment>
<comment type="subunit">
    <text evidence="1">Heterotrimer of A, B and C subunits.</text>
</comment>
<comment type="similarity">
    <text evidence="1">Belongs to the GatB/GatE family. GatB subfamily.</text>
</comment>
<gene>
    <name evidence="1" type="primary">gatB</name>
    <name type="ordered locus">alr1396</name>
</gene>
<organism>
    <name type="scientific">Nostoc sp. (strain PCC 7120 / SAG 25.82 / UTEX 2576)</name>
    <dbReference type="NCBI Taxonomy" id="103690"/>
    <lineage>
        <taxon>Bacteria</taxon>
        <taxon>Bacillati</taxon>
        <taxon>Cyanobacteriota</taxon>
        <taxon>Cyanophyceae</taxon>
        <taxon>Nostocales</taxon>
        <taxon>Nostocaceae</taxon>
        <taxon>Nostoc</taxon>
    </lineage>
</organism>